<protein>
    <recommendedName>
        <fullName>Phosphatidylinositol transfer protein SFH5</fullName>
        <shortName>PITP SFH5</shortName>
    </recommendedName>
    <alternativeName>
        <fullName>SEC14 homolog 5</fullName>
    </alternativeName>
</protein>
<proteinExistence type="evidence at protein level"/>
<accession>P47008</accession>
<accession>D6VW40</accession>
<accession>Q6Q535</accession>
<sequence>MKFDNDSEKQVFDKLKKAIPGIIKEKCAGYDELYGYKLNPEGLTQEEVDKYYDEKIADRLTYKLCKAYQFEYSTIVQNLIDILNWRREFNPLSCAYKEVHNTELQNVGILTFDANGDANKKAVTWNLYGQLVKKKELFQNVDKFVRYRIGLMEKGLSLLDFTSSDNNYMTQVHDYKGVSVWRMDSDIKNCSKTVIGIFQKYYPELLYAKYFVNVPTVFGWVYDLIKKFVDETTRKKFVVLTDGSKLGQYLKDCPYEGYGGKDKKNNLTKQNVTNVHPTEYGLYILQKQIIEDVE</sequence>
<reference key="1">
    <citation type="journal article" date="1996" name="Yeast">
        <title>Sequence analysis of a 40.7 kb segment from the left arm of yeast chromosome X reveals 14 known genes and 13 new open reading frames including homologues of genes clustered on the right arm of chromosome XI.</title>
        <authorList>
            <person name="Katsoulou C."/>
            <person name="Tzermia M."/>
            <person name="Tavernarakis N."/>
            <person name="Alexandraki D."/>
        </authorList>
    </citation>
    <scope>NUCLEOTIDE SEQUENCE [GENOMIC DNA]</scope>
    <source>
        <strain>ATCC 96604 / S288c / FY1679</strain>
    </source>
</reference>
<reference key="2">
    <citation type="journal article" date="1996" name="EMBO J.">
        <title>Complete nucleotide sequence of Saccharomyces cerevisiae chromosome X.</title>
        <authorList>
            <person name="Galibert F."/>
            <person name="Alexandraki D."/>
            <person name="Baur A."/>
            <person name="Boles E."/>
            <person name="Chalwatzis N."/>
            <person name="Chuat J.-C."/>
            <person name="Coster F."/>
            <person name="Cziepluch C."/>
            <person name="de Haan M."/>
            <person name="Domdey H."/>
            <person name="Durand P."/>
            <person name="Entian K.-D."/>
            <person name="Gatius M."/>
            <person name="Goffeau A."/>
            <person name="Grivell L.A."/>
            <person name="Hennemann A."/>
            <person name="Herbert C.J."/>
            <person name="Heumann K."/>
            <person name="Hilger F."/>
            <person name="Hollenberg C.P."/>
            <person name="Huang M.-E."/>
            <person name="Jacq C."/>
            <person name="Jauniaux J.-C."/>
            <person name="Katsoulou C."/>
            <person name="Kirchrath L."/>
            <person name="Kleine K."/>
            <person name="Kordes E."/>
            <person name="Koetter P."/>
            <person name="Liebl S."/>
            <person name="Louis E.J."/>
            <person name="Manus V."/>
            <person name="Mewes H.-W."/>
            <person name="Miosga T."/>
            <person name="Obermaier B."/>
            <person name="Perea J."/>
            <person name="Pohl T.M."/>
            <person name="Portetelle D."/>
            <person name="Pujol A."/>
            <person name="Purnelle B."/>
            <person name="Ramezani Rad M."/>
            <person name="Rasmussen S.W."/>
            <person name="Rose M."/>
            <person name="Rossau R."/>
            <person name="Schaaff-Gerstenschlaeger I."/>
            <person name="Smits P.H.M."/>
            <person name="Scarcez T."/>
            <person name="Soriano N."/>
            <person name="To Van D."/>
            <person name="Tzermia M."/>
            <person name="Van Broekhoven A."/>
            <person name="Vandenbol M."/>
            <person name="Wedler H."/>
            <person name="von Wettstein D."/>
            <person name="Wambutt R."/>
            <person name="Zagulski M."/>
            <person name="Zollner A."/>
            <person name="Karpfinger-Hartl L."/>
        </authorList>
    </citation>
    <scope>NUCLEOTIDE SEQUENCE [LARGE SCALE GENOMIC DNA]</scope>
    <source>
        <strain>ATCC 204508 / S288c</strain>
    </source>
</reference>
<reference key="3">
    <citation type="journal article" date="2014" name="G3 (Bethesda)">
        <title>The reference genome sequence of Saccharomyces cerevisiae: Then and now.</title>
        <authorList>
            <person name="Engel S.R."/>
            <person name="Dietrich F.S."/>
            <person name="Fisk D.G."/>
            <person name="Binkley G."/>
            <person name="Balakrishnan R."/>
            <person name="Costanzo M.C."/>
            <person name="Dwight S.S."/>
            <person name="Hitz B.C."/>
            <person name="Karra K."/>
            <person name="Nash R.S."/>
            <person name="Weng S."/>
            <person name="Wong E.D."/>
            <person name="Lloyd P."/>
            <person name="Skrzypek M.S."/>
            <person name="Miyasato S.R."/>
            <person name="Simison M."/>
            <person name="Cherry J.M."/>
        </authorList>
    </citation>
    <scope>GENOME REANNOTATION</scope>
    <source>
        <strain>ATCC 204508 / S288c</strain>
    </source>
</reference>
<reference key="4">
    <citation type="journal article" date="2007" name="Genome Res.">
        <title>Approaching a complete repository of sequence-verified protein-encoding clones for Saccharomyces cerevisiae.</title>
        <authorList>
            <person name="Hu Y."/>
            <person name="Rolfs A."/>
            <person name="Bhullar B."/>
            <person name="Murthy T.V.S."/>
            <person name="Zhu C."/>
            <person name="Berger M.F."/>
            <person name="Camargo A.A."/>
            <person name="Kelley F."/>
            <person name="McCarron S."/>
            <person name="Jepson D."/>
            <person name="Richardson A."/>
            <person name="Raphael J."/>
            <person name="Moreira D."/>
            <person name="Taycher E."/>
            <person name="Zuo D."/>
            <person name="Mohr S."/>
            <person name="Kane M.F."/>
            <person name="Williamson J."/>
            <person name="Simpson A.J.G."/>
            <person name="Bulyk M.L."/>
            <person name="Harlow E."/>
            <person name="Marsischky G."/>
            <person name="Kolodner R.D."/>
            <person name="LaBaer J."/>
        </authorList>
    </citation>
    <scope>NUCLEOTIDE SEQUENCE [GENOMIC DNA]</scope>
    <source>
        <strain>ATCC 204508 / S288c</strain>
    </source>
</reference>
<reference key="5">
    <citation type="journal article" date="2000" name="Mol. Biol. Cell">
        <title>Identification of a novel family of nonclassic yeast phosphatidylinositol transfer proteins whose function modulates phospholipase D activity and Sec14p-independent cell growth.</title>
        <authorList>
            <person name="Li X."/>
            <person name="Routt S.M."/>
            <person name="Xie Z."/>
            <person name="Cui X."/>
            <person name="Fang M."/>
            <person name="Kearns M.A."/>
            <person name="Bard M."/>
            <person name="Kirsch D.R."/>
            <person name="Bankaitis V.A."/>
        </authorList>
    </citation>
    <scope>FUNCTION</scope>
    <scope>CATALYTIC ACTIVITY</scope>
    <scope>PHOSPHATIDYLINOSITOL-BINDING</scope>
    <scope>SUBCELLULAR LOCATION</scope>
</reference>
<reference key="6">
    <citation type="journal article" date="2003" name="Eur. J. Biochem.">
        <title>Subcellular localization of yeast Sec14 homologues and their involvement in regulation of phospholipid turnover.</title>
        <authorList>
            <person name="Schnabl M."/>
            <person name="Oskolkova O.V."/>
            <person name="Holic R."/>
            <person name="Brezna B."/>
            <person name="Pichler H."/>
            <person name="Zagorsek M."/>
            <person name="Kohlwein S.D."/>
            <person name="Paltauf F."/>
            <person name="Daum G."/>
            <person name="Griac P."/>
        </authorList>
    </citation>
    <scope>FUNCTION</scope>
    <scope>SUBCELLULAR LOCATION</scope>
</reference>
<reference key="7">
    <citation type="journal article" date="2003" name="Nature">
        <title>Global analysis of protein localization in budding yeast.</title>
        <authorList>
            <person name="Huh W.-K."/>
            <person name="Falvo J.V."/>
            <person name="Gerke L.C."/>
            <person name="Carroll A.S."/>
            <person name="Howson R.W."/>
            <person name="Weissman J.S."/>
            <person name="O'Shea E.K."/>
        </authorList>
    </citation>
    <scope>SUBCELLULAR LOCATION [LARGE SCALE ANALYSIS]</scope>
</reference>
<reference key="8">
    <citation type="journal article" date="2003" name="Nature">
        <title>Global analysis of protein expression in yeast.</title>
        <authorList>
            <person name="Ghaemmaghami S."/>
            <person name="Huh W.-K."/>
            <person name="Bower K."/>
            <person name="Howson R.W."/>
            <person name="Belle A."/>
            <person name="Dephoure N."/>
            <person name="O'Shea E.K."/>
            <person name="Weissman J.S."/>
        </authorList>
    </citation>
    <scope>LEVEL OF PROTEIN EXPRESSION [LARGE SCALE ANALYSIS]</scope>
</reference>
<reference key="9">
    <citation type="journal article" date="2006" name="Biochem. Soc. Trans.">
        <title>Sec14p-like proteins regulate phosphoinositide homoeostasis and intracellular protein and lipid trafficking in yeast.</title>
        <authorList>
            <person name="Mousley C.J."/>
            <person name="Tyeryar K.R."/>
            <person name="Ryan M.M."/>
            <person name="Bankaitis V.A."/>
        </authorList>
    </citation>
    <scope>FUNCTION</scope>
    <scope>SUBCELLULAR LOCATION</scope>
</reference>
<reference key="10">
    <citation type="journal article" date="2020" name="Elife">
        <title>A Sec14-like phosphatidylinositol transfer protein paralog defines a novel class of heme-binding proteins.</title>
        <authorList>
            <person name="Khan D."/>
            <person name="Lee D."/>
            <person name="Gulten G."/>
            <person name="Aggarwal A."/>
            <person name="Wofford J."/>
            <person name="Krieger I."/>
            <person name="Tripathi A."/>
            <person name="Patrick J.W."/>
            <person name="Eckert D.M."/>
            <person name="Laganowsky A."/>
            <person name="Sacchettini J."/>
            <person name="Lindahl P."/>
            <person name="Bankaitis V.A."/>
        </authorList>
    </citation>
    <scope>FUNCTION</scope>
    <scope>HEME-BINDING</scope>
</reference>
<gene>
    <name type="primary">SFH5</name>
    <name type="ordered locus">YJL145W</name>
    <name type="ORF">J0644</name>
</gene>
<organism>
    <name type="scientific">Saccharomyces cerevisiae (strain ATCC 204508 / S288c)</name>
    <name type="common">Baker's yeast</name>
    <dbReference type="NCBI Taxonomy" id="559292"/>
    <lineage>
        <taxon>Eukaryota</taxon>
        <taxon>Fungi</taxon>
        <taxon>Dikarya</taxon>
        <taxon>Ascomycota</taxon>
        <taxon>Saccharomycotina</taxon>
        <taxon>Saccharomycetes</taxon>
        <taxon>Saccharomycetales</taxon>
        <taxon>Saccharomycetaceae</taxon>
        <taxon>Saccharomyces</taxon>
    </lineage>
</organism>
<dbReference type="EMBL" id="X87371">
    <property type="protein sequence ID" value="CAA60810.1"/>
    <property type="molecule type" value="Genomic_DNA"/>
</dbReference>
<dbReference type="EMBL" id="Z49420">
    <property type="protein sequence ID" value="CAA89440.1"/>
    <property type="molecule type" value="Genomic_DNA"/>
</dbReference>
<dbReference type="EMBL" id="AY558583">
    <property type="protein sequence ID" value="AAS56909.1"/>
    <property type="molecule type" value="Genomic_DNA"/>
</dbReference>
<dbReference type="EMBL" id="BK006943">
    <property type="protein sequence ID" value="DAA08656.1"/>
    <property type="molecule type" value="Genomic_DNA"/>
</dbReference>
<dbReference type="PIR" id="S55168">
    <property type="entry name" value="S55168"/>
</dbReference>
<dbReference type="RefSeq" id="NP_012390.1">
    <property type="nucleotide sequence ID" value="NM_001181578.1"/>
</dbReference>
<dbReference type="PDB" id="6W32">
    <property type="method" value="X-ray"/>
    <property type="resolution" value="2.90 A"/>
    <property type="chains" value="A/B/C=1-294"/>
</dbReference>
<dbReference type="PDBsum" id="6W32"/>
<dbReference type="SMR" id="P47008"/>
<dbReference type="BioGRID" id="33613">
    <property type="interactions" value="70"/>
</dbReference>
<dbReference type="FunCoup" id="P47008">
    <property type="interactions" value="85"/>
</dbReference>
<dbReference type="IntAct" id="P47008">
    <property type="interactions" value="6"/>
</dbReference>
<dbReference type="MINT" id="P47008"/>
<dbReference type="STRING" id="4932.YJL145W"/>
<dbReference type="SwissLipids" id="SLP:000000358"/>
<dbReference type="CarbonylDB" id="P47008"/>
<dbReference type="iPTMnet" id="P47008"/>
<dbReference type="PaxDb" id="4932-YJL145W"/>
<dbReference type="PeptideAtlas" id="P47008"/>
<dbReference type="EnsemblFungi" id="YJL145W_mRNA">
    <property type="protein sequence ID" value="YJL145W"/>
    <property type="gene ID" value="YJL145W"/>
</dbReference>
<dbReference type="GeneID" id="853296"/>
<dbReference type="KEGG" id="sce:YJL145W"/>
<dbReference type="AGR" id="SGD:S000003681"/>
<dbReference type="SGD" id="S000003681">
    <property type="gene designation" value="SFH5"/>
</dbReference>
<dbReference type="VEuPathDB" id="FungiDB:YJL145W"/>
<dbReference type="eggNOG" id="KOG1471">
    <property type="taxonomic scope" value="Eukaryota"/>
</dbReference>
<dbReference type="HOGENOM" id="CLU_045138_0_1_1"/>
<dbReference type="InParanoid" id="P47008"/>
<dbReference type="OMA" id="KRVVTWN"/>
<dbReference type="OrthoDB" id="75724at2759"/>
<dbReference type="BioCyc" id="YEAST:G3O-31589-MONOMER"/>
<dbReference type="BioGRID-ORCS" id="853296">
    <property type="hits" value="1 hit in 10 CRISPR screens"/>
</dbReference>
<dbReference type="PRO" id="PR:P47008"/>
<dbReference type="Proteomes" id="UP000002311">
    <property type="component" value="Chromosome X"/>
</dbReference>
<dbReference type="RNAct" id="P47008">
    <property type="molecule type" value="protein"/>
</dbReference>
<dbReference type="GO" id="GO:0071944">
    <property type="term" value="C:cell periphery"/>
    <property type="evidence" value="ECO:0000314"/>
    <property type="project" value="SGD"/>
</dbReference>
<dbReference type="GO" id="GO:0032541">
    <property type="term" value="C:cortical endoplasmic reticulum"/>
    <property type="evidence" value="ECO:0000314"/>
    <property type="project" value="SGD"/>
</dbReference>
<dbReference type="GO" id="GO:0005737">
    <property type="term" value="C:cytoplasm"/>
    <property type="evidence" value="ECO:0007005"/>
    <property type="project" value="SGD"/>
</dbReference>
<dbReference type="GO" id="GO:0005829">
    <property type="term" value="C:cytosol"/>
    <property type="evidence" value="ECO:0000314"/>
    <property type="project" value="SGD"/>
</dbReference>
<dbReference type="GO" id="GO:0005789">
    <property type="term" value="C:endoplasmic reticulum membrane"/>
    <property type="evidence" value="ECO:0007669"/>
    <property type="project" value="UniProtKB-SubCell"/>
</dbReference>
<dbReference type="GO" id="GO:0000329">
    <property type="term" value="C:fungal-type vacuole membrane"/>
    <property type="evidence" value="ECO:0007005"/>
    <property type="project" value="SGD"/>
</dbReference>
<dbReference type="GO" id="GO:0005634">
    <property type="term" value="C:nucleus"/>
    <property type="evidence" value="ECO:0007005"/>
    <property type="project" value="SGD"/>
</dbReference>
<dbReference type="GO" id="GO:0005886">
    <property type="term" value="C:plasma membrane"/>
    <property type="evidence" value="ECO:0000314"/>
    <property type="project" value="SGD"/>
</dbReference>
<dbReference type="GO" id="GO:0020037">
    <property type="term" value="F:heme binding"/>
    <property type="evidence" value="ECO:0000314"/>
    <property type="project" value="SGD"/>
</dbReference>
<dbReference type="GO" id="GO:0046872">
    <property type="term" value="F:metal ion binding"/>
    <property type="evidence" value="ECO:0007669"/>
    <property type="project" value="UniProtKB-KW"/>
</dbReference>
<dbReference type="GO" id="GO:0008526">
    <property type="term" value="F:phosphatidylinositol transfer activity"/>
    <property type="evidence" value="ECO:0000314"/>
    <property type="project" value="SGD"/>
</dbReference>
<dbReference type="GO" id="GO:0043001">
    <property type="term" value="P:Golgi to plasma membrane protein transport"/>
    <property type="evidence" value="ECO:0000316"/>
    <property type="project" value="SGD"/>
</dbReference>
<dbReference type="GO" id="GO:0046488">
    <property type="term" value="P:phosphatidylinositol metabolic process"/>
    <property type="evidence" value="ECO:0000316"/>
    <property type="project" value="SGD"/>
</dbReference>
<dbReference type="GO" id="GO:0015914">
    <property type="term" value="P:phospholipid transport"/>
    <property type="evidence" value="ECO:0000314"/>
    <property type="project" value="SGD"/>
</dbReference>
<dbReference type="GO" id="GO:2000114">
    <property type="term" value="P:regulation of establishment of cell polarity"/>
    <property type="evidence" value="ECO:0000316"/>
    <property type="project" value="SGD"/>
</dbReference>
<dbReference type="GO" id="GO:0017157">
    <property type="term" value="P:regulation of exocytosis"/>
    <property type="evidence" value="ECO:0000316"/>
    <property type="project" value="SGD"/>
</dbReference>
<dbReference type="CDD" id="cd00170">
    <property type="entry name" value="SEC14"/>
    <property type="match status" value="1"/>
</dbReference>
<dbReference type="FunFam" id="3.40.525.10:FF:000027">
    <property type="entry name" value="Phosphatidylinositol transfer protein"/>
    <property type="match status" value="1"/>
</dbReference>
<dbReference type="Gene3D" id="3.40.525.10">
    <property type="entry name" value="CRAL-TRIO lipid binding domain"/>
    <property type="match status" value="1"/>
</dbReference>
<dbReference type="InterPro" id="IPR001251">
    <property type="entry name" value="CRAL-TRIO_dom"/>
</dbReference>
<dbReference type="InterPro" id="IPR036865">
    <property type="entry name" value="CRAL-TRIO_dom_sf"/>
</dbReference>
<dbReference type="InterPro" id="IPR042938">
    <property type="entry name" value="Sfh5"/>
</dbReference>
<dbReference type="PANTHER" id="PTHR47669">
    <property type="entry name" value="PHOSPHATIDYLINOSITOL TRANSFER PROTEIN SFH5"/>
    <property type="match status" value="1"/>
</dbReference>
<dbReference type="PANTHER" id="PTHR47669:SF1">
    <property type="entry name" value="PHOSPHATIDYLINOSITOL TRANSFER PROTEIN SFH5"/>
    <property type="match status" value="1"/>
</dbReference>
<dbReference type="Pfam" id="PF00650">
    <property type="entry name" value="CRAL_TRIO"/>
    <property type="match status" value="1"/>
</dbReference>
<dbReference type="SMART" id="SM00516">
    <property type="entry name" value="SEC14"/>
    <property type="match status" value="1"/>
</dbReference>
<dbReference type="SUPFAM" id="SSF52087">
    <property type="entry name" value="CRAL/TRIO domain"/>
    <property type="match status" value="1"/>
</dbReference>
<dbReference type="PROSITE" id="PS50191">
    <property type="entry name" value="CRAL_TRIO"/>
    <property type="match status" value="1"/>
</dbReference>
<name>SFH5_YEAST</name>
<keyword id="KW-0002">3D-structure</keyword>
<keyword id="KW-0963">Cytoplasm</keyword>
<keyword id="KW-0256">Endoplasmic reticulum</keyword>
<keyword id="KW-0349">Heme</keyword>
<keyword id="KW-0408">Iron</keyword>
<keyword id="KW-0445">Lipid transport</keyword>
<keyword id="KW-0472">Membrane</keyword>
<keyword id="KW-0479">Metal-binding</keyword>
<keyword id="KW-0492">Microsome</keyword>
<keyword id="KW-1185">Reference proteome</keyword>
<keyword id="KW-0813">Transport</keyword>
<feature type="chain" id="PRO_0000203033" description="Phosphatidylinositol transfer protein SFH5">
    <location>
        <begin position="1"/>
        <end position="294"/>
    </location>
</feature>
<feature type="domain" description="CRAL-TRIO" evidence="2">
    <location>
        <begin position="100"/>
        <end position="266"/>
    </location>
</feature>
<feature type="binding site" evidence="1">
    <location>
        <position position="128"/>
    </location>
    <ligand>
        <name>heme</name>
        <dbReference type="ChEBI" id="CHEBI:30413"/>
    </ligand>
</feature>
<feature type="binding site" evidence="1">
    <location>
        <position position="148"/>
    </location>
    <ligand>
        <name>heme</name>
        <dbReference type="ChEBI" id="CHEBI:30413"/>
    </ligand>
</feature>
<feature type="binding site" evidence="1">
    <location>
        <position position="173"/>
    </location>
    <ligand>
        <name>heme</name>
        <dbReference type="ChEBI" id="CHEBI:30413"/>
    </ligand>
</feature>
<feature type="binding site" description="proximal binding residue" evidence="1">
    <location>
        <position position="175"/>
    </location>
    <ligand>
        <name>heme</name>
        <dbReference type="ChEBI" id="CHEBI:30413"/>
    </ligand>
    <ligandPart>
        <name>Fe</name>
        <dbReference type="ChEBI" id="CHEBI:18248"/>
    </ligandPart>
</feature>
<feature type="binding site" evidence="1">
    <location>
        <position position="209"/>
    </location>
    <ligand>
        <name>heme</name>
        <dbReference type="ChEBI" id="CHEBI:30413"/>
    </ligand>
</feature>
<feature type="sequence conflict" description="In Ref. 4; AAS56909." evidence="9" ref="4">
    <original>F</original>
    <variation>S</variation>
    <location>
        <position position="70"/>
    </location>
</feature>
<feature type="helix" evidence="10">
    <location>
        <begin position="6"/>
        <end position="26"/>
    </location>
</feature>
<feature type="helix" evidence="10">
    <location>
        <begin position="47"/>
        <end position="49"/>
    </location>
</feature>
<feature type="helix" evidence="10">
    <location>
        <begin position="54"/>
        <end position="67"/>
    </location>
</feature>
<feature type="turn" evidence="10">
    <location>
        <begin position="68"/>
        <end position="70"/>
    </location>
</feature>
<feature type="helix" evidence="10">
    <location>
        <begin position="72"/>
        <end position="88"/>
    </location>
</feature>
<feature type="helix" evidence="10">
    <location>
        <begin position="91"/>
        <end position="96"/>
    </location>
</feature>
<feature type="helix" evidence="10">
    <location>
        <begin position="102"/>
        <end position="105"/>
    </location>
</feature>
<feature type="strand" evidence="10">
    <location>
        <begin position="108"/>
        <end position="112"/>
    </location>
</feature>
<feature type="strand" evidence="10">
    <location>
        <begin position="121"/>
        <end position="126"/>
    </location>
</feature>
<feature type="helix" evidence="10">
    <location>
        <begin position="128"/>
        <end position="131"/>
    </location>
</feature>
<feature type="turn" evidence="10">
    <location>
        <begin position="135"/>
        <end position="139"/>
    </location>
</feature>
<feature type="helix" evidence="10">
    <location>
        <begin position="141"/>
        <end position="156"/>
    </location>
</feature>
<feature type="strand" evidence="10">
    <location>
        <begin position="164"/>
        <end position="174"/>
    </location>
</feature>
<feature type="helix" evidence="10">
    <location>
        <begin position="185"/>
        <end position="201"/>
    </location>
</feature>
<feature type="strand" evidence="10">
    <location>
        <begin position="206"/>
        <end position="213"/>
    </location>
</feature>
<feature type="helix" evidence="10">
    <location>
        <begin position="216"/>
        <end position="218"/>
    </location>
</feature>
<feature type="helix" evidence="10">
    <location>
        <begin position="219"/>
        <end position="226"/>
    </location>
</feature>
<feature type="helix" evidence="10">
    <location>
        <begin position="231"/>
        <end position="234"/>
    </location>
</feature>
<feature type="strand" evidence="10">
    <location>
        <begin position="237"/>
        <end position="242"/>
    </location>
</feature>
<feature type="helix" evidence="10">
    <location>
        <begin position="243"/>
        <end position="248"/>
    </location>
</feature>
<feature type="helix" evidence="10">
    <location>
        <begin position="255"/>
        <end position="258"/>
    </location>
</feature>
<feature type="helix" evidence="10">
    <location>
        <begin position="267"/>
        <end position="270"/>
    </location>
</feature>
<feature type="helix" evidence="10">
    <location>
        <begin position="279"/>
        <end position="288"/>
    </location>
</feature>
<evidence type="ECO:0000250" key="1">
    <source>
        <dbReference type="UniProtKB" id="A6ZQI5"/>
    </source>
</evidence>
<evidence type="ECO:0000255" key="2">
    <source>
        <dbReference type="PROSITE-ProRule" id="PRU00056"/>
    </source>
</evidence>
<evidence type="ECO:0000269" key="3">
    <source>
    </source>
</evidence>
<evidence type="ECO:0000269" key="4">
    <source>
    </source>
</evidence>
<evidence type="ECO:0000269" key="5">
    <source>
    </source>
</evidence>
<evidence type="ECO:0000269" key="6">
    <source>
    </source>
</evidence>
<evidence type="ECO:0000269" key="7">
    <source>
    </source>
</evidence>
<evidence type="ECO:0000269" key="8">
    <source>
    </source>
</evidence>
<evidence type="ECO:0000305" key="9"/>
<evidence type="ECO:0007829" key="10">
    <source>
        <dbReference type="PDB" id="6W32"/>
    </source>
</evidence>
<comment type="function">
    <text evidence="3 4 7 8">Non-classical phosphatidylinositol (PtdIns) transfer protein (PITP), which exhibits PtdIns-binding/transfer activity in the absence of detectable PtdCho-binding/transfer activity. Regulates PtdIns(4,5)P2 homeostasis at the plasma membrane. Heme-binding protein that may play a role in organic oxidant-induced stress responses (PubMed:32780017).</text>
</comment>
<comment type="catalytic activity">
    <reaction evidence="3">
        <text>a 1,2-diacyl-sn-glycero-3-phospho-(1D-myo-inositol)(in) = a 1,2-diacyl-sn-glycero-3-phospho-(1D-myo-inositol)(out)</text>
        <dbReference type="Rhea" id="RHEA:38691"/>
        <dbReference type="ChEBI" id="CHEBI:57880"/>
    </reaction>
    <physiologicalReaction direction="left-to-right" evidence="3">
        <dbReference type="Rhea" id="RHEA:38692"/>
    </physiologicalReaction>
</comment>
<comment type="cofactor">
    <cofactor evidence="8">
        <name>heme b</name>
        <dbReference type="ChEBI" id="CHEBI:60344"/>
    </cofactor>
</comment>
<comment type="subcellular location">
    <subcellularLocation>
        <location evidence="3 4 5">Cytoplasm</location>
    </subcellularLocation>
    <subcellularLocation>
        <location evidence="7">Endoplasmic reticulum membrane</location>
        <topology evidence="7">Peripheral membrane protein</topology>
    </subcellularLocation>
    <subcellularLocation>
        <location evidence="4 7">Microsome membrane</location>
        <topology evidence="7">Peripheral membrane protein</topology>
    </subcellularLocation>
</comment>
<comment type="miscellaneous">
    <text evidence="6">Present with 6540 molecules/cell in log phase SD medium.</text>
</comment>
<comment type="similarity">
    <text evidence="9">Belongs to the SFH5 family.</text>
</comment>